<comment type="similarity">
    <text evidence="1">Belongs to the bacterial ribosomal protein bS16 family.</text>
</comment>
<sequence>MIKLRLKRFGKKKEASFRIVACNSTSRRDGRPLQELGFYNPRTKETRLDTEALRTRLTQGAQPTNVVRTLLEKGGLLEKTERPSIAIGKARLEKEKLAKAKTKDGDNDSSKAESESNEAET</sequence>
<feature type="chain" id="PRO_1000049313" description="Small ribosomal subunit protein bS16">
    <location>
        <begin position="1"/>
        <end position="121"/>
    </location>
</feature>
<feature type="region of interest" description="Disordered" evidence="2">
    <location>
        <begin position="97"/>
        <end position="121"/>
    </location>
</feature>
<feature type="compositionally biased region" description="Basic and acidic residues" evidence="2">
    <location>
        <begin position="97"/>
        <end position="114"/>
    </location>
</feature>
<keyword id="KW-1185">Reference proteome</keyword>
<keyword id="KW-0687">Ribonucleoprotein</keyword>
<keyword id="KW-0689">Ribosomal protein</keyword>
<reference key="1">
    <citation type="journal article" date="2007" name="PLoS Genet.">
        <title>Patterns and implications of gene gain and loss in the evolution of Prochlorococcus.</title>
        <authorList>
            <person name="Kettler G.C."/>
            <person name="Martiny A.C."/>
            <person name="Huang K."/>
            <person name="Zucker J."/>
            <person name="Coleman M.L."/>
            <person name="Rodrigue S."/>
            <person name="Chen F."/>
            <person name="Lapidus A."/>
            <person name="Ferriera S."/>
            <person name="Johnson J."/>
            <person name="Steglich C."/>
            <person name="Church G.M."/>
            <person name="Richardson P."/>
            <person name="Chisholm S.W."/>
        </authorList>
    </citation>
    <scope>NUCLEOTIDE SEQUENCE [LARGE SCALE GENOMIC DNA]</scope>
    <source>
        <strain>MIT 9301</strain>
    </source>
</reference>
<dbReference type="EMBL" id="CP000576">
    <property type="protein sequence ID" value="ABO18093.1"/>
    <property type="molecule type" value="Genomic_DNA"/>
</dbReference>
<dbReference type="RefSeq" id="WP_011863400.1">
    <property type="nucleotide sequence ID" value="NC_009091.1"/>
</dbReference>
<dbReference type="SMR" id="A3PEB8"/>
<dbReference type="STRING" id="167546.P9301_14701"/>
<dbReference type="KEGG" id="pmg:P9301_14701"/>
<dbReference type="eggNOG" id="COG0228">
    <property type="taxonomic scope" value="Bacteria"/>
</dbReference>
<dbReference type="HOGENOM" id="CLU_100590_3_2_3"/>
<dbReference type="OrthoDB" id="9807878at2"/>
<dbReference type="Proteomes" id="UP000001430">
    <property type="component" value="Chromosome"/>
</dbReference>
<dbReference type="GO" id="GO:0005737">
    <property type="term" value="C:cytoplasm"/>
    <property type="evidence" value="ECO:0007669"/>
    <property type="project" value="UniProtKB-ARBA"/>
</dbReference>
<dbReference type="GO" id="GO:0015935">
    <property type="term" value="C:small ribosomal subunit"/>
    <property type="evidence" value="ECO:0007669"/>
    <property type="project" value="TreeGrafter"/>
</dbReference>
<dbReference type="GO" id="GO:0003735">
    <property type="term" value="F:structural constituent of ribosome"/>
    <property type="evidence" value="ECO:0007669"/>
    <property type="project" value="InterPro"/>
</dbReference>
<dbReference type="GO" id="GO:0006412">
    <property type="term" value="P:translation"/>
    <property type="evidence" value="ECO:0007669"/>
    <property type="project" value="UniProtKB-UniRule"/>
</dbReference>
<dbReference type="Gene3D" id="3.30.1320.10">
    <property type="match status" value="1"/>
</dbReference>
<dbReference type="HAMAP" id="MF_00385">
    <property type="entry name" value="Ribosomal_bS16"/>
    <property type="match status" value="1"/>
</dbReference>
<dbReference type="InterPro" id="IPR000307">
    <property type="entry name" value="Ribosomal_bS16"/>
</dbReference>
<dbReference type="InterPro" id="IPR020592">
    <property type="entry name" value="Ribosomal_bS16_CS"/>
</dbReference>
<dbReference type="InterPro" id="IPR023803">
    <property type="entry name" value="Ribosomal_bS16_dom_sf"/>
</dbReference>
<dbReference type="NCBIfam" id="TIGR00002">
    <property type="entry name" value="S16"/>
    <property type="match status" value="1"/>
</dbReference>
<dbReference type="PANTHER" id="PTHR12919">
    <property type="entry name" value="30S RIBOSOMAL PROTEIN S16"/>
    <property type="match status" value="1"/>
</dbReference>
<dbReference type="PANTHER" id="PTHR12919:SF20">
    <property type="entry name" value="SMALL RIBOSOMAL SUBUNIT PROTEIN BS16M"/>
    <property type="match status" value="1"/>
</dbReference>
<dbReference type="Pfam" id="PF00886">
    <property type="entry name" value="Ribosomal_S16"/>
    <property type="match status" value="1"/>
</dbReference>
<dbReference type="SUPFAM" id="SSF54565">
    <property type="entry name" value="Ribosomal protein S16"/>
    <property type="match status" value="1"/>
</dbReference>
<dbReference type="PROSITE" id="PS00732">
    <property type="entry name" value="RIBOSOMAL_S16"/>
    <property type="match status" value="1"/>
</dbReference>
<organism>
    <name type="scientific">Prochlorococcus marinus (strain MIT 9301)</name>
    <dbReference type="NCBI Taxonomy" id="167546"/>
    <lineage>
        <taxon>Bacteria</taxon>
        <taxon>Bacillati</taxon>
        <taxon>Cyanobacteriota</taxon>
        <taxon>Cyanophyceae</taxon>
        <taxon>Synechococcales</taxon>
        <taxon>Prochlorococcaceae</taxon>
        <taxon>Prochlorococcus</taxon>
    </lineage>
</organism>
<gene>
    <name evidence="1" type="primary">rpsP</name>
    <name evidence="1" type="synonym">rps16</name>
    <name type="ordered locus">P9301_14701</name>
</gene>
<proteinExistence type="inferred from homology"/>
<name>RS16_PROM0</name>
<accession>A3PEB8</accession>
<protein>
    <recommendedName>
        <fullName evidence="1">Small ribosomal subunit protein bS16</fullName>
    </recommendedName>
    <alternativeName>
        <fullName evidence="3">30S ribosomal protein S16</fullName>
    </alternativeName>
</protein>
<evidence type="ECO:0000255" key="1">
    <source>
        <dbReference type="HAMAP-Rule" id="MF_00385"/>
    </source>
</evidence>
<evidence type="ECO:0000256" key="2">
    <source>
        <dbReference type="SAM" id="MobiDB-lite"/>
    </source>
</evidence>
<evidence type="ECO:0000305" key="3"/>